<sequence>MSHHWGYGKHNGPEHWHKDFPIANGERQSPVDIDTKAVVQDPALKPLALVYGEATSRRMVNNGHSFNVEYDDSQDKAVLKDGPLTGTYRLVQFHFHWGSSDDQGSEHTVDRKKYAAELHLVHWNTKYGDFGTAAQQPDGLAVVGVFLKVGDANPALQKVLDALDSIKTKGKSTDFPNFDPGSLLPNVLDYWTYPGSLTTPPLLESVTWIVLKEPISVSSQQMLKFRTLNFNAEGEPELLMLANWRPAQPLKNRQVRGFPK</sequence>
<feature type="initiator methionine" description="Removed" evidence="5 6">
    <location>
        <position position="1"/>
    </location>
</feature>
<feature type="chain" id="PRO_0000077417" description="Carbonic anhydrase 2">
    <location>
        <begin position="2"/>
        <end position="260"/>
    </location>
</feature>
<feature type="domain" description="Alpha-carbonic anhydrase" evidence="3">
    <location>
        <begin position="3"/>
        <end position="259"/>
    </location>
</feature>
<feature type="active site" description="Proton donor/acceptor" evidence="1">
    <location>
        <position position="64"/>
    </location>
</feature>
<feature type="binding site" evidence="4">
    <location>
        <position position="94"/>
    </location>
    <ligand>
        <name>Zn(2+)</name>
        <dbReference type="ChEBI" id="CHEBI:29105"/>
        <note>catalytic</note>
    </ligand>
</feature>
<feature type="binding site" evidence="4">
    <location>
        <position position="96"/>
    </location>
    <ligand>
        <name>Zn(2+)</name>
        <dbReference type="ChEBI" id="CHEBI:29105"/>
        <note>catalytic</note>
    </ligand>
</feature>
<feature type="binding site" evidence="4">
    <location>
        <position position="119"/>
    </location>
    <ligand>
        <name>Zn(2+)</name>
        <dbReference type="ChEBI" id="CHEBI:29105"/>
        <note>catalytic</note>
    </ligand>
</feature>
<feature type="binding site" evidence="1">
    <location>
        <begin position="198"/>
        <end position="199"/>
    </location>
    <ligand>
        <name>substrate</name>
    </ligand>
</feature>
<feature type="site" description="Fine-tunes the proton-transfer properties of H-64" evidence="1">
    <location>
        <position position="7"/>
    </location>
</feature>
<feature type="site" description="Fine-tunes the proton-transfer properties of H-64" evidence="1">
    <location>
        <position position="62"/>
    </location>
</feature>
<feature type="site" description="Fine-tunes the proton-transfer properties of H-64" evidence="1">
    <location>
        <position position="67"/>
    </location>
</feature>
<feature type="modified residue" description="N-acetylserine" evidence="1">
    <location>
        <position position="2"/>
    </location>
</feature>
<feature type="modified residue" description="Phosphoserine" evidence="2">
    <location>
        <position position="2"/>
    </location>
</feature>
<feature type="modified residue" description="Phosphoserine" evidence="1">
    <location>
        <position position="165"/>
    </location>
</feature>
<feature type="modified residue" description="Phosphoserine" evidence="1">
    <location>
        <position position="172"/>
    </location>
</feature>
<feature type="sequence variant" description="In one of the major forms.">
    <original>R</original>
    <variation>Q</variation>
    <location>
        <position position="57"/>
    </location>
</feature>
<feature type="turn" evidence="10">
    <location>
        <begin position="9"/>
        <end position="11"/>
    </location>
</feature>
<feature type="helix" evidence="10">
    <location>
        <begin position="13"/>
        <end position="15"/>
    </location>
</feature>
<feature type="turn" evidence="10">
    <location>
        <begin position="16"/>
        <end position="19"/>
    </location>
</feature>
<feature type="helix" evidence="10">
    <location>
        <begin position="21"/>
        <end position="24"/>
    </location>
</feature>
<feature type="strand" evidence="11">
    <location>
        <begin position="25"/>
        <end position="27"/>
    </location>
</feature>
<feature type="strand" evidence="8">
    <location>
        <begin position="31"/>
        <end position="33"/>
    </location>
</feature>
<feature type="helix" evidence="9">
    <location>
        <begin position="35"/>
        <end position="37"/>
    </location>
</feature>
<feature type="strand" evidence="10">
    <location>
        <begin position="47"/>
        <end position="50"/>
    </location>
</feature>
<feature type="strand" evidence="10">
    <location>
        <begin position="56"/>
        <end position="61"/>
    </location>
</feature>
<feature type="strand" evidence="10">
    <location>
        <begin position="63"/>
        <end position="70"/>
    </location>
</feature>
<feature type="strand" evidence="10">
    <location>
        <begin position="73"/>
        <end position="81"/>
    </location>
</feature>
<feature type="strand" evidence="10">
    <location>
        <begin position="88"/>
        <end position="97"/>
    </location>
</feature>
<feature type="strand" evidence="8">
    <location>
        <begin position="99"/>
        <end position="102"/>
    </location>
</feature>
<feature type="strand" evidence="10">
    <location>
        <begin position="106"/>
        <end position="109"/>
    </location>
</feature>
<feature type="strand" evidence="10">
    <location>
        <begin position="115"/>
        <end position="124"/>
    </location>
</feature>
<feature type="helix" evidence="10">
    <location>
        <begin position="125"/>
        <end position="127"/>
    </location>
</feature>
<feature type="helix" evidence="10">
    <location>
        <begin position="130"/>
        <end position="133"/>
    </location>
</feature>
<feature type="strand" evidence="10">
    <location>
        <begin position="139"/>
        <end position="151"/>
    </location>
</feature>
<feature type="helix" evidence="10">
    <location>
        <begin position="154"/>
        <end position="160"/>
    </location>
</feature>
<feature type="helix" evidence="10">
    <location>
        <begin position="161"/>
        <end position="166"/>
    </location>
</feature>
<feature type="strand" evidence="8">
    <location>
        <begin position="167"/>
        <end position="169"/>
    </location>
</feature>
<feature type="strand" evidence="10">
    <location>
        <begin position="172"/>
        <end position="174"/>
    </location>
</feature>
<feature type="helix" evidence="10">
    <location>
        <begin position="180"/>
        <end position="183"/>
    </location>
</feature>
<feature type="strand" evidence="10">
    <location>
        <begin position="190"/>
        <end position="195"/>
    </location>
</feature>
<feature type="strand" evidence="10">
    <location>
        <begin position="206"/>
        <end position="213"/>
    </location>
</feature>
<feature type="strand" evidence="10">
    <location>
        <begin position="215"/>
        <end position="217"/>
    </location>
</feature>
<feature type="helix" evidence="10">
    <location>
        <begin position="219"/>
        <end position="225"/>
    </location>
</feature>
<feature type="strand" evidence="10">
    <location>
        <begin position="229"/>
        <end position="231"/>
    </location>
</feature>
<feature type="strand" evidence="10">
    <location>
        <begin position="256"/>
        <end position="258"/>
    </location>
</feature>
<dbReference type="EC" id="4.2.1.1" evidence="1"/>
<dbReference type="EC" id="4.2.1.69" evidence="1"/>
<dbReference type="EMBL" id="AY240020">
    <property type="protein sequence ID" value="AAO85140.1"/>
    <property type="molecule type" value="mRNA"/>
</dbReference>
<dbReference type="EMBL" id="BC103260">
    <property type="protein sequence ID" value="AAI03261.1"/>
    <property type="molecule type" value="mRNA"/>
</dbReference>
<dbReference type="PIR" id="A01144">
    <property type="entry name" value="CRBO2"/>
</dbReference>
<dbReference type="RefSeq" id="NP_848667.1">
    <property type="nucleotide sequence ID" value="NM_178572.2"/>
</dbReference>
<dbReference type="PDB" id="1G6V">
    <property type="method" value="X-ray"/>
    <property type="resolution" value="3.50 A"/>
    <property type="chains" value="A=1-254"/>
</dbReference>
<dbReference type="PDB" id="1V9E">
    <property type="method" value="X-ray"/>
    <property type="resolution" value="1.95 A"/>
    <property type="chains" value="A/B=2-260"/>
</dbReference>
<dbReference type="PDB" id="1V9I">
    <property type="method" value="X-ray"/>
    <property type="resolution" value="2.95 A"/>
    <property type="chains" value="C=2-260"/>
</dbReference>
<dbReference type="PDB" id="4CNR">
    <property type="method" value="X-ray"/>
    <property type="resolution" value="2.29 A"/>
    <property type="chains" value="A/B/C/D=1-260"/>
</dbReference>
<dbReference type="PDB" id="4CNV">
    <property type="method" value="X-ray"/>
    <property type="resolution" value="1.62 A"/>
    <property type="chains" value="A=1-260"/>
</dbReference>
<dbReference type="PDB" id="4CNW">
    <property type="method" value="X-ray"/>
    <property type="resolution" value="2.03 A"/>
    <property type="chains" value="A/B=1-260"/>
</dbReference>
<dbReference type="PDB" id="4CNX">
    <property type="method" value="X-ray"/>
    <property type="resolution" value="1.23 A"/>
    <property type="chains" value="A=1-260"/>
</dbReference>
<dbReference type="PDB" id="5A25">
    <property type="method" value="X-ray"/>
    <property type="resolution" value="1.90 A"/>
    <property type="chains" value="A/B=1-260"/>
</dbReference>
<dbReference type="PDB" id="5EZT">
    <property type="method" value="X-ray"/>
    <property type="resolution" value="1.54 A"/>
    <property type="chains" value="X=4-260"/>
</dbReference>
<dbReference type="PDB" id="6SKS">
    <property type="method" value="X-ray"/>
    <property type="resolution" value="1.75 A"/>
    <property type="chains" value="A=1-260"/>
</dbReference>
<dbReference type="PDB" id="6SKT">
    <property type="method" value="X-ray"/>
    <property type="resolution" value="1.90 A"/>
    <property type="chains" value="A=1-260"/>
</dbReference>
<dbReference type="PDB" id="6SKV">
    <property type="method" value="X-ray"/>
    <property type="resolution" value="1.75 A"/>
    <property type="chains" value="A=1-260"/>
</dbReference>
<dbReference type="PDBsum" id="1G6V"/>
<dbReference type="PDBsum" id="1V9E"/>
<dbReference type="PDBsum" id="1V9I"/>
<dbReference type="PDBsum" id="4CNR"/>
<dbReference type="PDBsum" id="4CNV"/>
<dbReference type="PDBsum" id="4CNW"/>
<dbReference type="PDBsum" id="4CNX"/>
<dbReference type="PDBsum" id="5A25"/>
<dbReference type="PDBsum" id="5EZT"/>
<dbReference type="PDBsum" id="6SKS"/>
<dbReference type="PDBsum" id="6SKT"/>
<dbReference type="PDBsum" id="6SKV"/>
<dbReference type="PCDDB" id="P00921"/>
<dbReference type="SASBDB" id="P00921"/>
<dbReference type="SMR" id="P00921"/>
<dbReference type="FunCoup" id="P00921">
    <property type="interactions" value="690"/>
</dbReference>
<dbReference type="IntAct" id="P00921">
    <property type="interactions" value="1"/>
</dbReference>
<dbReference type="MINT" id="P00921"/>
<dbReference type="STRING" id="9913.ENSBTAP00000023581"/>
<dbReference type="BindingDB" id="P00921"/>
<dbReference type="ChEMBL" id="CHEMBL2283"/>
<dbReference type="DrugCentral" id="P00921"/>
<dbReference type="PaxDb" id="9913-ENSBTAP00000023581"/>
<dbReference type="PeptideAtlas" id="P00921"/>
<dbReference type="ABCD" id="P00921">
    <property type="antibodies" value="1 sequenced antibody"/>
</dbReference>
<dbReference type="GeneID" id="280740"/>
<dbReference type="KEGG" id="bta:280740"/>
<dbReference type="CTD" id="760"/>
<dbReference type="eggNOG" id="KOG0382">
    <property type="taxonomic scope" value="Eukaryota"/>
</dbReference>
<dbReference type="InParanoid" id="P00921"/>
<dbReference type="OrthoDB" id="429145at2759"/>
<dbReference type="BRENDA" id="4.2.1.1">
    <property type="organism ID" value="908"/>
</dbReference>
<dbReference type="EvolutionaryTrace" id="P00921"/>
<dbReference type="PRO" id="PR:P00921"/>
<dbReference type="Proteomes" id="UP000009136">
    <property type="component" value="Unplaced"/>
</dbReference>
<dbReference type="GO" id="GO:0045177">
    <property type="term" value="C:apical part of cell"/>
    <property type="evidence" value="ECO:0000318"/>
    <property type="project" value="GO_Central"/>
</dbReference>
<dbReference type="GO" id="GO:0005737">
    <property type="term" value="C:cytoplasm"/>
    <property type="evidence" value="ECO:0000250"/>
    <property type="project" value="UniProtKB"/>
</dbReference>
<dbReference type="GO" id="GO:0005886">
    <property type="term" value="C:plasma membrane"/>
    <property type="evidence" value="ECO:0000250"/>
    <property type="project" value="UniProtKB"/>
</dbReference>
<dbReference type="GO" id="GO:0004089">
    <property type="term" value="F:carbonate dehydratase activity"/>
    <property type="evidence" value="ECO:0000318"/>
    <property type="project" value="GO_Central"/>
</dbReference>
<dbReference type="GO" id="GO:0018820">
    <property type="term" value="F:cyanamide hydratase activity"/>
    <property type="evidence" value="ECO:0007669"/>
    <property type="project" value="RHEA"/>
</dbReference>
<dbReference type="GO" id="GO:0008270">
    <property type="term" value="F:zinc ion binding"/>
    <property type="evidence" value="ECO:0007669"/>
    <property type="project" value="InterPro"/>
</dbReference>
<dbReference type="GO" id="GO:0038166">
    <property type="term" value="P:angiotensin-activated signaling pathway"/>
    <property type="evidence" value="ECO:0000250"/>
    <property type="project" value="UniProtKB"/>
</dbReference>
<dbReference type="GO" id="GO:0015670">
    <property type="term" value="P:carbon dioxide transport"/>
    <property type="evidence" value="ECO:0000318"/>
    <property type="project" value="GO_Central"/>
</dbReference>
<dbReference type="GO" id="GO:2001150">
    <property type="term" value="P:positive regulation of dipeptide transmembrane transport"/>
    <property type="evidence" value="ECO:0000250"/>
    <property type="project" value="UniProtKB"/>
</dbReference>
<dbReference type="GO" id="GO:0051453">
    <property type="term" value="P:regulation of intracellular pH"/>
    <property type="evidence" value="ECO:0000250"/>
    <property type="project" value="UniProtKB"/>
</dbReference>
<dbReference type="GO" id="GO:0044070">
    <property type="term" value="P:regulation of monoatomic anion transport"/>
    <property type="evidence" value="ECO:0000250"/>
    <property type="project" value="UniProtKB"/>
</dbReference>
<dbReference type="FunFam" id="3.10.200.10:FF:000001">
    <property type="entry name" value="Carbonic anhydrase 2"/>
    <property type="match status" value="1"/>
</dbReference>
<dbReference type="Gene3D" id="3.10.200.10">
    <property type="entry name" value="Alpha carbonic anhydrase"/>
    <property type="match status" value="1"/>
</dbReference>
<dbReference type="InterPro" id="IPR001148">
    <property type="entry name" value="CA_dom"/>
</dbReference>
<dbReference type="InterPro" id="IPR036398">
    <property type="entry name" value="CA_dom_sf"/>
</dbReference>
<dbReference type="InterPro" id="IPR023561">
    <property type="entry name" value="Carbonic_anhydrase_a-class"/>
</dbReference>
<dbReference type="InterPro" id="IPR018338">
    <property type="entry name" value="Carbonic_anhydrase_a-class_CS"/>
</dbReference>
<dbReference type="PANTHER" id="PTHR18952">
    <property type="entry name" value="CARBONIC ANHYDRASE"/>
    <property type="match status" value="1"/>
</dbReference>
<dbReference type="PANTHER" id="PTHR18952:SF120">
    <property type="entry name" value="CARBONIC ANHYDRASE 2"/>
    <property type="match status" value="1"/>
</dbReference>
<dbReference type="Pfam" id="PF00194">
    <property type="entry name" value="Carb_anhydrase"/>
    <property type="match status" value="1"/>
</dbReference>
<dbReference type="SMART" id="SM01057">
    <property type="entry name" value="Carb_anhydrase"/>
    <property type="match status" value="1"/>
</dbReference>
<dbReference type="SUPFAM" id="SSF51069">
    <property type="entry name" value="Carbonic anhydrase"/>
    <property type="match status" value="1"/>
</dbReference>
<dbReference type="PROSITE" id="PS00162">
    <property type="entry name" value="ALPHA_CA_1"/>
    <property type="match status" value="1"/>
</dbReference>
<dbReference type="PROSITE" id="PS51144">
    <property type="entry name" value="ALPHA_CA_2"/>
    <property type="match status" value="1"/>
</dbReference>
<organism>
    <name type="scientific">Bos taurus</name>
    <name type="common">Bovine</name>
    <dbReference type="NCBI Taxonomy" id="9913"/>
    <lineage>
        <taxon>Eukaryota</taxon>
        <taxon>Metazoa</taxon>
        <taxon>Chordata</taxon>
        <taxon>Craniata</taxon>
        <taxon>Vertebrata</taxon>
        <taxon>Euteleostomi</taxon>
        <taxon>Mammalia</taxon>
        <taxon>Eutheria</taxon>
        <taxon>Laurasiatheria</taxon>
        <taxon>Artiodactyla</taxon>
        <taxon>Ruminantia</taxon>
        <taxon>Pecora</taxon>
        <taxon>Bovidae</taxon>
        <taxon>Bovinae</taxon>
        <taxon>Bos</taxon>
    </lineage>
</organism>
<name>CAH2_BOVIN</name>
<keyword id="KW-0002">3D-structure</keyword>
<keyword id="KW-0007">Acetylation</keyword>
<keyword id="KW-1003">Cell membrane</keyword>
<keyword id="KW-0963">Cytoplasm</keyword>
<keyword id="KW-0903">Direct protein sequencing</keyword>
<keyword id="KW-0456">Lyase</keyword>
<keyword id="KW-0472">Membrane</keyword>
<keyword id="KW-0479">Metal-binding</keyword>
<keyword id="KW-0597">Phosphoprotein</keyword>
<keyword id="KW-1185">Reference proteome</keyword>
<keyword id="KW-0862">Zinc</keyword>
<evidence type="ECO:0000250" key="1">
    <source>
        <dbReference type="UniProtKB" id="P00918"/>
    </source>
</evidence>
<evidence type="ECO:0000250" key="2">
    <source>
        <dbReference type="UniProtKB" id="P27139"/>
    </source>
</evidence>
<evidence type="ECO:0000255" key="3">
    <source>
        <dbReference type="PROSITE-ProRule" id="PRU01134"/>
    </source>
</evidence>
<evidence type="ECO:0000269" key="4">
    <source>
    </source>
</evidence>
<evidence type="ECO:0000269" key="5">
    <source>
    </source>
</evidence>
<evidence type="ECO:0000269" key="6">
    <source>
    </source>
</evidence>
<evidence type="ECO:0000305" key="7"/>
<evidence type="ECO:0007829" key="8">
    <source>
        <dbReference type="PDB" id="1G6V"/>
    </source>
</evidence>
<evidence type="ECO:0007829" key="9">
    <source>
        <dbReference type="PDB" id="4CNV"/>
    </source>
</evidence>
<evidence type="ECO:0007829" key="10">
    <source>
        <dbReference type="PDB" id="4CNX"/>
    </source>
</evidence>
<evidence type="ECO:0007829" key="11">
    <source>
        <dbReference type="PDB" id="5EZT"/>
    </source>
</evidence>
<proteinExistence type="evidence at protein level"/>
<reference key="1">
    <citation type="submission" date="2003-02" db="EMBL/GenBank/DDBJ databases">
        <title>Full length cDNA of bovine carbonic anhydrase II.</title>
        <authorList>
            <person name="Daigle R."/>
            <person name="Castro I."/>
            <person name="Desrochers M."/>
            <person name="Charest P.-M."/>
        </authorList>
    </citation>
    <scope>NUCLEOTIDE SEQUENCE [MRNA]</scope>
    <source>
        <tissue>Bone marrow</tissue>
    </source>
</reference>
<reference key="2">
    <citation type="submission" date="2005-08" db="EMBL/GenBank/DDBJ databases">
        <authorList>
            <consortium name="NIH - Mammalian Gene Collection (MGC) project"/>
        </authorList>
    </citation>
    <scope>NUCLEOTIDE SEQUENCE [LARGE SCALE MRNA]</scope>
    <source>
        <strain>Hereford</strain>
        <tissue>Hypothalamus</tissue>
    </source>
</reference>
<reference key="3">
    <citation type="journal article" date="1976" name="Biochimie">
        <title>Primary structure of bovine erythrocyte carbonic carbonic anhydrase CI. II. Complete sequence.</title>
        <authorList>
            <person name="Sciaky M."/>
            <person name="Limozin N."/>
            <person name="Filippi-Foveau D."/>
            <person name="Gulian J.M."/>
            <person name="Laurent-Tabusse G."/>
        </authorList>
    </citation>
    <scope>PROTEIN SEQUENCE OF 2-260</scope>
    <source>
        <tissue>Erythrocyte</tissue>
    </source>
</reference>
<reference key="4">
    <citation type="journal article" date="1977" name="Biochimie">
        <title>Genetic independence of two forms of carbonic anhydrase from bovine erythrocytes.</title>
        <authorList>
            <person name="Gulian J.M."/>
            <person name="Limozin N."/>
            <person name="Mallet B."/>
            <person name="di Costanzo J."/>
            <person name="Charrel M."/>
        </authorList>
    </citation>
    <scope>SEQUENCE REVISION</scope>
</reference>
<reference key="5">
    <citation type="journal article" date="2004" name="Acta Crystallogr. D">
        <title>Structure of bovine carbonic anhydrase II at 1.95 A resolution.</title>
        <authorList>
            <person name="Saito R."/>
            <person name="Sato T."/>
            <person name="Ikai A."/>
            <person name="Tanaka N."/>
        </authorList>
    </citation>
    <scope>X-RAY CRYSTALLOGRAPHY (1.95 ANGSTROMS) OF 2-260 IN COMPLEX WITH ZINC ION</scope>
</reference>
<reference key="6">
    <citation type="journal article" date="2001" name="J. Biol. Chem.">
        <title>Antigen specificity and high affinity binding provided by one single loop of a camel single-domain antibody.</title>
        <authorList>
            <person name="Desmyter A."/>
            <person name="Decanniere K."/>
            <person name="Muyldermans S."/>
            <person name="Wyns L."/>
        </authorList>
    </citation>
    <scope>X-RAY CRYSTALLOGRAPHY (3.50 ANGSTROMS) OF 1-254 IN COMPLEX WITH ANTIBODY</scope>
</reference>
<protein>
    <recommendedName>
        <fullName>Carbonic anhydrase 2</fullName>
        <ecNumber evidence="1">4.2.1.1</ecNumber>
    </recommendedName>
    <alternativeName>
        <fullName>Carbonate dehydratase II</fullName>
    </alternativeName>
    <alternativeName>
        <fullName>Carbonic anhydrase II</fullName>
        <shortName>CA-II</shortName>
    </alternativeName>
    <alternativeName>
        <fullName>Cyanamide hydratase CA2</fullName>
        <ecNumber evidence="1">4.2.1.69</ecNumber>
    </alternativeName>
</protein>
<gene>
    <name type="primary">CA2</name>
</gene>
<accession>P00921</accession>
<accession>Q3ZBJ5</accession>
<accession>Q865Y7</accession>
<comment type="function">
    <text evidence="1">Catalyzes the reversible hydration of carbon dioxide (By similarity). Can also hydrate cyanamide to urea (By similarity). Involved in the regulation of fluid secretion into the anterior chamber of the eye (By similarity). Essential for bone resorption and osteoclast differentiation (By similarity). Contributes to intracellular pH regulation in the duodenal upper villous epithelium during proton-coupled peptide absorption (By similarity). Stimulates the chloride-bicarbonate exchange activity of SLC26A6 (By similarity).</text>
</comment>
<comment type="catalytic activity">
    <reaction evidence="1">
        <text>hydrogencarbonate + H(+) = CO2 + H2O</text>
        <dbReference type="Rhea" id="RHEA:10748"/>
        <dbReference type="ChEBI" id="CHEBI:15377"/>
        <dbReference type="ChEBI" id="CHEBI:15378"/>
        <dbReference type="ChEBI" id="CHEBI:16526"/>
        <dbReference type="ChEBI" id="CHEBI:17544"/>
        <dbReference type="EC" id="4.2.1.1"/>
    </reaction>
</comment>
<comment type="catalytic activity">
    <reaction evidence="1">
        <text>urea = cyanamide + H2O</text>
        <dbReference type="Rhea" id="RHEA:23056"/>
        <dbReference type="ChEBI" id="CHEBI:15377"/>
        <dbReference type="ChEBI" id="CHEBI:16199"/>
        <dbReference type="ChEBI" id="CHEBI:16698"/>
        <dbReference type="EC" id="4.2.1.69"/>
    </reaction>
</comment>
<comment type="cofactor">
    <cofactor evidence="4">
        <name>Zn(2+)</name>
        <dbReference type="ChEBI" id="CHEBI:29105"/>
    </cofactor>
</comment>
<comment type="activity regulation">
    <text evidence="1">Inhibited by acetazolamide.</text>
</comment>
<comment type="subunit">
    <text evidence="1">Interacts with SLC4A4. Interaction with SLC4A7 regulates SLC4A7 transporter activity (By similarity).</text>
</comment>
<comment type="subcellular location">
    <subcellularLocation>
        <location evidence="1">Cytoplasm</location>
    </subcellularLocation>
    <subcellularLocation>
        <location evidence="1">Cell membrane</location>
    </subcellularLocation>
    <text evidence="1">Colocalized with SLC26A6 at the surface of the cell membrane in order to form a bicarbonate transport metabolon. Displaced from the cytosolic surface of the cell membrane by PKC in phorbol myristate acetate (PMA)-induced cells.</text>
</comment>
<comment type="miscellaneous">
    <text>One minor and two major forms were isolated chromatographically.</text>
</comment>
<comment type="similarity">
    <text evidence="7">Belongs to the alpha-carbonic anhydrase family.</text>
</comment>